<comment type="function">
    <text evidence="1">Catalyzes the formation of 6,7-dimethyl-8-ribityllumazine by condensation of 5-amino-6-(D-ribitylamino)uracil with 3,4-dihydroxy-2-butanone 4-phosphate. This is the penultimate step in the biosynthesis of riboflavin.</text>
</comment>
<comment type="catalytic activity">
    <reaction evidence="1">
        <text>(2S)-2-hydroxy-3-oxobutyl phosphate + 5-amino-6-(D-ribitylamino)uracil = 6,7-dimethyl-8-(1-D-ribityl)lumazine + phosphate + 2 H2O + H(+)</text>
        <dbReference type="Rhea" id="RHEA:26152"/>
        <dbReference type="ChEBI" id="CHEBI:15377"/>
        <dbReference type="ChEBI" id="CHEBI:15378"/>
        <dbReference type="ChEBI" id="CHEBI:15934"/>
        <dbReference type="ChEBI" id="CHEBI:43474"/>
        <dbReference type="ChEBI" id="CHEBI:58201"/>
        <dbReference type="ChEBI" id="CHEBI:58830"/>
        <dbReference type="EC" id="2.5.1.78"/>
    </reaction>
</comment>
<comment type="pathway">
    <text evidence="1">Cofactor biosynthesis; riboflavin biosynthesis; riboflavin from 2-hydroxy-3-oxobutyl phosphate and 5-amino-6-(D-ribitylamino)uracil: step 1/2.</text>
</comment>
<comment type="similarity">
    <text evidence="1">Belongs to the DMRL synthase family.</text>
</comment>
<keyword id="KW-0686">Riboflavin biosynthesis</keyword>
<keyword id="KW-0808">Transferase</keyword>
<evidence type="ECO:0000255" key="1">
    <source>
        <dbReference type="HAMAP-Rule" id="MF_00178"/>
    </source>
</evidence>
<evidence type="ECO:0000256" key="2">
    <source>
        <dbReference type="SAM" id="MobiDB-lite"/>
    </source>
</evidence>
<protein>
    <recommendedName>
        <fullName evidence="1">6,7-dimethyl-8-ribityllumazine synthase</fullName>
        <shortName evidence="1">DMRL synthase</shortName>
        <shortName evidence="1">LS</shortName>
        <shortName evidence="1">Lumazine synthase</shortName>
        <ecNumber evidence="1">2.5.1.78</ecNumber>
    </recommendedName>
</protein>
<feature type="chain" id="PRO_1000040384" description="6,7-dimethyl-8-ribityllumazine synthase">
    <location>
        <begin position="1"/>
        <end position="173"/>
    </location>
</feature>
<feature type="region of interest" description="Disordered" evidence="2">
    <location>
        <begin position="150"/>
        <end position="173"/>
    </location>
</feature>
<feature type="compositionally biased region" description="Acidic residues" evidence="2">
    <location>
        <begin position="154"/>
        <end position="173"/>
    </location>
</feature>
<feature type="active site" description="Proton donor" evidence="1">
    <location>
        <position position="90"/>
    </location>
</feature>
<feature type="binding site" evidence="1">
    <location>
        <position position="24"/>
    </location>
    <ligand>
        <name>5-amino-6-(D-ribitylamino)uracil</name>
        <dbReference type="ChEBI" id="CHEBI:15934"/>
    </ligand>
</feature>
<feature type="binding site" evidence="1">
    <location>
        <begin position="58"/>
        <end position="60"/>
    </location>
    <ligand>
        <name>5-amino-6-(D-ribitylamino)uracil</name>
        <dbReference type="ChEBI" id="CHEBI:15934"/>
    </ligand>
</feature>
<feature type="binding site" evidence="1">
    <location>
        <begin position="82"/>
        <end position="84"/>
    </location>
    <ligand>
        <name>5-amino-6-(D-ribitylamino)uracil</name>
        <dbReference type="ChEBI" id="CHEBI:15934"/>
    </ligand>
</feature>
<feature type="binding site" evidence="1">
    <location>
        <begin position="87"/>
        <end position="88"/>
    </location>
    <ligand>
        <name>(2S)-2-hydroxy-3-oxobutyl phosphate</name>
        <dbReference type="ChEBI" id="CHEBI:58830"/>
    </ligand>
</feature>
<feature type="binding site" evidence="1">
    <location>
        <position position="115"/>
    </location>
    <ligand>
        <name>5-amino-6-(D-ribitylamino)uracil</name>
        <dbReference type="ChEBI" id="CHEBI:15934"/>
    </ligand>
</feature>
<feature type="binding site" evidence="1">
    <location>
        <position position="129"/>
    </location>
    <ligand>
        <name>(2S)-2-hydroxy-3-oxobutyl phosphate</name>
        <dbReference type="ChEBI" id="CHEBI:58830"/>
    </ligand>
</feature>
<accession>A3NCF9</accession>
<sequence>MEIGQYQPNLEGDGLRIGIVQSRFNEPVCNGLADACVEELERLGVSGEDVLLVTVPGALEIPLALQKLAESNQFDALIALGAVIRGETYHFELVSNESGAGITRIALDFNTPIANAVLTTETDEQAIARMTEKGRDAARVAVEMANLTMTLDQLSDDEEDEEDEDDEDEEERA</sequence>
<gene>
    <name evidence="1" type="primary">ribH</name>
    <name type="ordered locus">BURPS668_3017</name>
</gene>
<proteinExistence type="inferred from homology"/>
<dbReference type="EC" id="2.5.1.78" evidence="1"/>
<dbReference type="EMBL" id="CP000570">
    <property type="protein sequence ID" value="ABN84450.1"/>
    <property type="molecule type" value="Genomic_DNA"/>
</dbReference>
<dbReference type="RefSeq" id="WP_004186056.1">
    <property type="nucleotide sequence ID" value="NC_009074.1"/>
</dbReference>
<dbReference type="SMR" id="A3NCF9"/>
<dbReference type="GeneID" id="93061204"/>
<dbReference type="KEGG" id="bpd:BURPS668_3017"/>
<dbReference type="HOGENOM" id="CLU_089358_1_2_4"/>
<dbReference type="UniPathway" id="UPA00275">
    <property type="reaction ID" value="UER00404"/>
</dbReference>
<dbReference type="GO" id="GO:0005829">
    <property type="term" value="C:cytosol"/>
    <property type="evidence" value="ECO:0007669"/>
    <property type="project" value="TreeGrafter"/>
</dbReference>
<dbReference type="GO" id="GO:0009349">
    <property type="term" value="C:riboflavin synthase complex"/>
    <property type="evidence" value="ECO:0007669"/>
    <property type="project" value="InterPro"/>
</dbReference>
<dbReference type="GO" id="GO:0000906">
    <property type="term" value="F:6,7-dimethyl-8-ribityllumazine synthase activity"/>
    <property type="evidence" value="ECO:0007669"/>
    <property type="project" value="UniProtKB-UniRule"/>
</dbReference>
<dbReference type="GO" id="GO:0009231">
    <property type="term" value="P:riboflavin biosynthetic process"/>
    <property type="evidence" value="ECO:0007669"/>
    <property type="project" value="UniProtKB-UniRule"/>
</dbReference>
<dbReference type="CDD" id="cd09209">
    <property type="entry name" value="Lumazine_synthase-I"/>
    <property type="match status" value="1"/>
</dbReference>
<dbReference type="Gene3D" id="3.40.50.960">
    <property type="entry name" value="Lumazine/riboflavin synthase"/>
    <property type="match status" value="1"/>
</dbReference>
<dbReference type="HAMAP" id="MF_00178">
    <property type="entry name" value="Lumazine_synth"/>
    <property type="match status" value="1"/>
</dbReference>
<dbReference type="InterPro" id="IPR034964">
    <property type="entry name" value="LS"/>
</dbReference>
<dbReference type="InterPro" id="IPR002180">
    <property type="entry name" value="LS/RS"/>
</dbReference>
<dbReference type="InterPro" id="IPR036467">
    <property type="entry name" value="LS/RS_sf"/>
</dbReference>
<dbReference type="NCBIfam" id="TIGR00114">
    <property type="entry name" value="lumazine-synth"/>
    <property type="match status" value="1"/>
</dbReference>
<dbReference type="PANTHER" id="PTHR21058:SF0">
    <property type="entry name" value="6,7-DIMETHYL-8-RIBITYLLUMAZINE SYNTHASE"/>
    <property type="match status" value="1"/>
</dbReference>
<dbReference type="PANTHER" id="PTHR21058">
    <property type="entry name" value="6,7-DIMETHYL-8-RIBITYLLUMAZINE SYNTHASE DMRL SYNTHASE LUMAZINE SYNTHASE"/>
    <property type="match status" value="1"/>
</dbReference>
<dbReference type="Pfam" id="PF00885">
    <property type="entry name" value="DMRL_synthase"/>
    <property type="match status" value="1"/>
</dbReference>
<dbReference type="SUPFAM" id="SSF52121">
    <property type="entry name" value="Lumazine synthase"/>
    <property type="match status" value="1"/>
</dbReference>
<organism>
    <name type="scientific">Burkholderia pseudomallei (strain 668)</name>
    <dbReference type="NCBI Taxonomy" id="320373"/>
    <lineage>
        <taxon>Bacteria</taxon>
        <taxon>Pseudomonadati</taxon>
        <taxon>Pseudomonadota</taxon>
        <taxon>Betaproteobacteria</taxon>
        <taxon>Burkholderiales</taxon>
        <taxon>Burkholderiaceae</taxon>
        <taxon>Burkholderia</taxon>
        <taxon>pseudomallei group</taxon>
    </lineage>
</organism>
<name>RISB_BURP6</name>
<reference key="1">
    <citation type="journal article" date="2010" name="Genome Biol. Evol.">
        <title>Continuing evolution of Burkholderia mallei through genome reduction and large-scale rearrangements.</title>
        <authorList>
            <person name="Losada L."/>
            <person name="Ronning C.M."/>
            <person name="DeShazer D."/>
            <person name="Woods D."/>
            <person name="Fedorova N."/>
            <person name="Kim H.S."/>
            <person name="Shabalina S.A."/>
            <person name="Pearson T.R."/>
            <person name="Brinkac L."/>
            <person name="Tan P."/>
            <person name="Nandi T."/>
            <person name="Crabtree J."/>
            <person name="Badger J."/>
            <person name="Beckstrom-Sternberg S."/>
            <person name="Saqib M."/>
            <person name="Schutzer S.E."/>
            <person name="Keim P."/>
            <person name="Nierman W.C."/>
        </authorList>
    </citation>
    <scope>NUCLEOTIDE SEQUENCE [LARGE SCALE GENOMIC DNA]</scope>
    <source>
        <strain>668</strain>
    </source>
</reference>